<comment type="similarity">
    <text evidence="1">Belongs to the UPF0358 family.</text>
</comment>
<gene>
    <name type="ordered locus">GTNG_0942</name>
</gene>
<dbReference type="EMBL" id="CP000557">
    <property type="protein sequence ID" value="ABO66320.1"/>
    <property type="molecule type" value="Genomic_DNA"/>
</dbReference>
<dbReference type="RefSeq" id="WP_008878731.1">
    <property type="nucleotide sequence ID" value="NC_009328.1"/>
</dbReference>
<dbReference type="SMR" id="A4ILW6"/>
<dbReference type="KEGG" id="gtn:GTNG_0942"/>
<dbReference type="eggNOG" id="COG4838">
    <property type="taxonomic scope" value="Bacteria"/>
</dbReference>
<dbReference type="HOGENOM" id="CLU_160493_1_0_9"/>
<dbReference type="Proteomes" id="UP000001578">
    <property type="component" value="Chromosome"/>
</dbReference>
<dbReference type="Gene3D" id="1.10.287.750">
    <property type="entry name" value="SO2669-like"/>
    <property type="match status" value="1"/>
</dbReference>
<dbReference type="HAMAP" id="MF_01560">
    <property type="entry name" value="UPF0358"/>
    <property type="match status" value="1"/>
</dbReference>
<dbReference type="InterPro" id="IPR009983">
    <property type="entry name" value="UPF0358"/>
</dbReference>
<dbReference type="InterPro" id="IPR036270">
    <property type="entry name" value="UPF0358_sf"/>
</dbReference>
<dbReference type="NCBIfam" id="NF010187">
    <property type="entry name" value="PRK13666.1"/>
    <property type="match status" value="1"/>
</dbReference>
<dbReference type="Pfam" id="PF07408">
    <property type="entry name" value="DUF1507"/>
    <property type="match status" value="1"/>
</dbReference>
<dbReference type="SUPFAM" id="SSF140404">
    <property type="entry name" value="EF2458-like"/>
    <property type="match status" value="1"/>
</dbReference>
<proteinExistence type="inferred from homology"/>
<organism>
    <name type="scientific">Geobacillus thermodenitrificans (strain NG80-2)</name>
    <dbReference type="NCBI Taxonomy" id="420246"/>
    <lineage>
        <taxon>Bacteria</taxon>
        <taxon>Bacillati</taxon>
        <taxon>Bacillota</taxon>
        <taxon>Bacilli</taxon>
        <taxon>Bacillales</taxon>
        <taxon>Anoxybacillaceae</taxon>
        <taxon>Geobacillus</taxon>
    </lineage>
</organism>
<accession>A4ILW6</accession>
<name>Y942_GEOTN</name>
<sequence>MTDESMSYQEKAYALLQADAEKIIQLIRVQMDHLTMPQCPLYEEVLDTQMFGLSREIDFAVRLGLIEAKEGKALLDRLERELSALHEAVTKKRVR</sequence>
<protein>
    <recommendedName>
        <fullName evidence="1">UPF0358 protein GTNG_0942</fullName>
    </recommendedName>
</protein>
<reference key="1">
    <citation type="journal article" date="2007" name="Proc. Natl. Acad. Sci. U.S.A.">
        <title>Genome and proteome of long-chain alkane degrading Geobacillus thermodenitrificans NG80-2 isolated from a deep-subsurface oil reservoir.</title>
        <authorList>
            <person name="Feng L."/>
            <person name="Wang W."/>
            <person name="Cheng J."/>
            <person name="Ren Y."/>
            <person name="Zhao G."/>
            <person name="Gao C."/>
            <person name="Tang Y."/>
            <person name="Liu X."/>
            <person name="Han W."/>
            <person name="Peng X."/>
            <person name="Liu R."/>
            <person name="Wang L."/>
        </authorList>
    </citation>
    <scope>NUCLEOTIDE SEQUENCE [LARGE SCALE GENOMIC DNA]</scope>
    <source>
        <strain>NG80-2</strain>
    </source>
</reference>
<feature type="chain" id="PRO_1000069002" description="UPF0358 protein GTNG_0942">
    <location>
        <begin position="1"/>
        <end position="95"/>
    </location>
</feature>
<evidence type="ECO:0000255" key="1">
    <source>
        <dbReference type="HAMAP-Rule" id="MF_01560"/>
    </source>
</evidence>